<protein>
    <recommendedName>
        <fullName>Subtilisin-like protease 4</fullName>
        <ecNumber>3.4.21.-</ecNumber>
    </recommendedName>
</protein>
<name>SUB4_TRIRU</name>
<dbReference type="EC" id="3.4.21.-"/>
<dbReference type="EMBL" id="AY344481">
    <property type="protein sequence ID" value="AAR02423.1"/>
    <property type="molecule type" value="Genomic_DNA"/>
</dbReference>
<dbReference type="SMR" id="Q69F35"/>
<dbReference type="MEROPS" id="S08.115"/>
<dbReference type="GlyCosmos" id="Q69F35">
    <property type="glycosylation" value="4 sites, No reported glycans"/>
</dbReference>
<dbReference type="VEuPathDB" id="FungiDB:TERG_01617"/>
<dbReference type="GO" id="GO:0005576">
    <property type="term" value="C:extracellular region"/>
    <property type="evidence" value="ECO:0007669"/>
    <property type="project" value="UniProtKB-SubCell"/>
</dbReference>
<dbReference type="GO" id="GO:0004252">
    <property type="term" value="F:serine-type endopeptidase activity"/>
    <property type="evidence" value="ECO:0007669"/>
    <property type="project" value="InterPro"/>
</dbReference>
<dbReference type="GO" id="GO:0006508">
    <property type="term" value="P:proteolysis"/>
    <property type="evidence" value="ECO:0007669"/>
    <property type="project" value="UniProtKB-KW"/>
</dbReference>
<dbReference type="CDD" id="cd04077">
    <property type="entry name" value="Peptidases_S8_PCSK9_ProteinaseK_like"/>
    <property type="match status" value="1"/>
</dbReference>
<dbReference type="FunFam" id="3.40.50.200:FF:000014">
    <property type="entry name" value="Proteinase K"/>
    <property type="match status" value="1"/>
</dbReference>
<dbReference type="Gene3D" id="3.30.70.80">
    <property type="entry name" value="Peptidase S8 propeptide/proteinase inhibitor I9"/>
    <property type="match status" value="1"/>
</dbReference>
<dbReference type="Gene3D" id="3.40.50.200">
    <property type="entry name" value="Peptidase S8/S53 domain"/>
    <property type="match status" value="1"/>
</dbReference>
<dbReference type="InterPro" id="IPR034193">
    <property type="entry name" value="PCSK9_ProteinaseK-like"/>
</dbReference>
<dbReference type="InterPro" id="IPR000209">
    <property type="entry name" value="Peptidase_S8/S53_dom"/>
</dbReference>
<dbReference type="InterPro" id="IPR036852">
    <property type="entry name" value="Peptidase_S8/S53_dom_sf"/>
</dbReference>
<dbReference type="InterPro" id="IPR023828">
    <property type="entry name" value="Peptidase_S8_Ser-AS"/>
</dbReference>
<dbReference type="InterPro" id="IPR050131">
    <property type="entry name" value="Peptidase_S8_subtilisin-like"/>
</dbReference>
<dbReference type="InterPro" id="IPR015500">
    <property type="entry name" value="Peptidase_S8_subtilisin-rel"/>
</dbReference>
<dbReference type="InterPro" id="IPR010259">
    <property type="entry name" value="S8pro/Inhibitor_I9"/>
</dbReference>
<dbReference type="InterPro" id="IPR037045">
    <property type="entry name" value="S8pro/Inhibitor_I9_sf"/>
</dbReference>
<dbReference type="PANTHER" id="PTHR43806:SF11">
    <property type="entry name" value="CEREVISIN-RELATED"/>
    <property type="match status" value="1"/>
</dbReference>
<dbReference type="PANTHER" id="PTHR43806">
    <property type="entry name" value="PEPTIDASE S8"/>
    <property type="match status" value="1"/>
</dbReference>
<dbReference type="Pfam" id="PF05922">
    <property type="entry name" value="Inhibitor_I9"/>
    <property type="match status" value="1"/>
</dbReference>
<dbReference type="Pfam" id="PF00082">
    <property type="entry name" value="Peptidase_S8"/>
    <property type="match status" value="1"/>
</dbReference>
<dbReference type="PRINTS" id="PR00723">
    <property type="entry name" value="SUBTILISIN"/>
</dbReference>
<dbReference type="SUPFAM" id="SSF54897">
    <property type="entry name" value="Protease propeptides/inhibitors"/>
    <property type="match status" value="1"/>
</dbReference>
<dbReference type="SUPFAM" id="SSF52743">
    <property type="entry name" value="Subtilisin-like"/>
    <property type="match status" value="1"/>
</dbReference>
<dbReference type="PROSITE" id="PS51892">
    <property type="entry name" value="SUBTILASE"/>
    <property type="match status" value="1"/>
</dbReference>
<dbReference type="PROSITE" id="PS00138">
    <property type="entry name" value="SUBTILASE_SER"/>
    <property type="match status" value="1"/>
</dbReference>
<reference key="1">
    <citation type="journal article" date="2004" name="Gene">
        <title>Secreted subtilisin gene family in Trichophyton rubrum.</title>
        <authorList>
            <person name="Jousson O."/>
            <person name="Lechenne B."/>
            <person name="Bontems O."/>
            <person name="Mignon B."/>
            <person name="Reichard U."/>
            <person name="Barblan J."/>
            <person name="Quadroni M."/>
            <person name="Monod M."/>
        </authorList>
    </citation>
    <scope>NUCLEOTIDE SEQUENCE [GENOMIC DNA]</scope>
    <scope>IDENTIFICATION BY MASS SPECTROMETRY</scope>
    <scope>SUBCELLULAR LOCATION</scope>
    <scope>FUNCTION</scope>
</reference>
<reference key="2">
    <citation type="journal article" date="2009" name="Eukaryot. Cell">
        <title>Gene expression profiling in the human pathogenic dermatophyte Trichophyton rubrum during growth on proteins.</title>
        <authorList>
            <person name="Zaugg C."/>
            <person name="Monod M."/>
            <person name="Weber J."/>
            <person name="Harshman K."/>
            <person name="Pradervand S."/>
            <person name="Thomas J."/>
            <person name="Bueno M."/>
            <person name="Giddey K."/>
            <person name="Staib P."/>
        </authorList>
    </citation>
    <scope>INDUCTION</scope>
</reference>
<proteinExistence type="evidence at protein level"/>
<organism>
    <name type="scientific">Trichophyton rubrum</name>
    <name type="common">Athlete's foot fungus</name>
    <name type="synonym">Epidermophyton rubrum</name>
    <dbReference type="NCBI Taxonomy" id="5551"/>
    <lineage>
        <taxon>Eukaryota</taxon>
        <taxon>Fungi</taxon>
        <taxon>Dikarya</taxon>
        <taxon>Ascomycota</taxon>
        <taxon>Pezizomycotina</taxon>
        <taxon>Eurotiomycetes</taxon>
        <taxon>Eurotiomycetidae</taxon>
        <taxon>Onygenales</taxon>
        <taxon>Arthrodermataceae</taxon>
        <taxon>Trichophyton</taxon>
    </lineage>
</organism>
<gene>
    <name type="primary">SUB4</name>
</gene>
<keyword id="KW-0325">Glycoprotein</keyword>
<keyword id="KW-0378">Hydrolase</keyword>
<keyword id="KW-0645">Protease</keyword>
<keyword id="KW-0964">Secreted</keyword>
<keyword id="KW-0720">Serine protease</keyword>
<keyword id="KW-0732">Signal</keyword>
<keyword id="KW-0843">Virulence</keyword>
<keyword id="KW-0865">Zymogen</keyword>
<feature type="signal peptide" evidence="2">
    <location>
        <begin position="1"/>
        <end position="19"/>
    </location>
</feature>
<feature type="propeptide" id="PRO_0000380790" evidence="1">
    <location>
        <begin position="20"/>
        <end position="118"/>
    </location>
</feature>
<feature type="chain" id="PRO_0000380791" description="Subtilisin-like protease 4">
    <location>
        <begin position="119"/>
        <end position="399"/>
    </location>
</feature>
<feature type="domain" description="Inhibitor I9" evidence="2">
    <location>
        <begin position="38"/>
        <end position="117"/>
    </location>
</feature>
<feature type="domain" description="Peptidase S8" evidence="3">
    <location>
        <begin position="128"/>
        <end position="399"/>
    </location>
</feature>
<feature type="active site" description="Charge relay system" evidence="3">
    <location>
        <position position="160"/>
    </location>
</feature>
<feature type="active site" description="Charge relay system" evidence="3">
    <location>
        <position position="191"/>
    </location>
</feature>
<feature type="active site" description="Charge relay system" evidence="3">
    <location>
        <position position="346"/>
    </location>
</feature>
<feature type="glycosylation site" description="N-linked (GlcNAc...) asparagine" evidence="2">
    <location>
        <position position="102"/>
    </location>
</feature>
<feature type="glycosylation site" description="N-linked (GlcNAc...) asparagine" evidence="2">
    <location>
        <position position="252"/>
    </location>
</feature>
<feature type="glycosylation site" description="N-linked (GlcNAc...) asparagine" evidence="2">
    <location>
        <position position="308"/>
    </location>
</feature>
<feature type="glycosylation site" description="N-linked (GlcNAc...) asparagine" evidence="2">
    <location>
        <position position="395"/>
    </location>
</feature>
<sequence length="399" mass="42197">MVCLKTLSVFLAAFAAADARAVFKTQGHKNSEMIPDNYIVVMKDGVSQDDFKAHISSVSSIHSTNKAKRGTNTEGMKREFDIMNWRGYHGHFDRDTLEEILNDSKVDYVEQDQVVRISGLVTQRSAPSWGLGRVSHRQAGSRDYVFDDSAGRGVTIYGVDTGIDINHQDFRGRARWGTNTADRDNADRHGHGTHTASTFAGTAYGIAKNANIVAVKVLGSDGSGSTSGIIAGINYCVQDAQQRGILGKAAMNLSLGGGFSQANNDAVTRAQNAGIFVAVAAGNDNKDARNYSPASAPAVCTVASSTINDSKSSFSNWGPVVDIYAPGSDIIAARPGGGSTTMSGTSMASPHVAGMGAYMIGMGANPRQVCDRLKQLATAAIRNPGFSTTNRLLYNGSGQ</sequence>
<accession>Q69F35</accession>
<evidence type="ECO:0000250" key="1"/>
<evidence type="ECO:0000255" key="2"/>
<evidence type="ECO:0000255" key="3">
    <source>
        <dbReference type="PROSITE-ProRule" id="PRU01240"/>
    </source>
</evidence>
<evidence type="ECO:0000269" key="4">
    <source>
    </source>
</evidence>
<evidence type="ECO:0000269" key="5">
    <source>
    </source>
</evidence>
<evidence type="ECO:0000305" key="6"/>
<comment type="function">
    <text evidence="4">Secreted subtilisin-like serine protease with keratinolytic activity that contributes to pathogenicity.</text>
</comment>
<comment type="subcellular location">
    <subcellularLocation>
        <location evidence="4">Secreted</location>
    </subcellularLocation>
</comment>
<comment type="induction">
    <text evidence="5">Expression is strongly increased during growth on protein-rich medium. Expression levels are the same whether keratin is present or not in the protein-rich medium.</text>
</comment>
<comment type="similarity">
    <text evidence="6">Belongs to the peptidase S8 family.</text>
</comment>